<keyword id="KW-0963">Cytoplasm</keyword>
<keyword id="KW-0671">Queuosine biosynthesis</keyword>
<keyword id="KW-1185">Reference proteome</keyword>
<keyword id="KW-0949">S-adenosyl-L-methionine</keyword>
<keyword id="KW-0808">Transferase</keyword>
<feature type="chain" id="PRO_1000076021" description="S-adenosylmethionine:tRNA ribosyltransferase-isomerase">
    <location>
        <begin position="1"/>
        <end position="374"/>
    </location>
</feature>
<organism>
    <name type="scientific">Sorangium cellulosum (strain So ce56)</name>
    <name type="common">Polyangium cellulosum (strain So ce56)</name>
    <dbReference type="NCBI Taxonomy" id="448385"/>
    <lineage>
        <taxon>Bacteria</taxon>
        <taxon>Pseudomonadati</taxon>
        <taxon>Myxococcota</taxon>
        <taxon>Polyangia</taxon>
        <taxon>Polyangiales</taxon>
        <taxon>Polyangiaceae</taxon>
        <taxon>Sorangium</taxon>
    </lineage>
</organism>
<comment type="function">
    <text evidence="1">Transfers and isomerizes the ribose moiety from AdoMet to the 7-aminomethyl group of 7-deazaguanine (preQ1-tRNA) to give epoxyqueuosine (oQ-tRNA).</text>
</comment>
<comment type="catalytic activity">
    <reaction evidence="1">
        <text>7-aminomethyl-7-carbaguanosine(34) in tRNA + S-adenosyl-L-methionine = epoxyqueuosine(34) in tRNA + adenine + L-methionine + 2 H(+)</text>
        <dbReference type="Rhea" id="RHEA:32155"/>
        <dbReference type="Rhea" id="RHEA-COMP:10342"/>
        <dbReference type="Rhea" id="RHEA-COMP:18582"/>
        <dbReference type="ChEBI" id="CHEBI:15378"/>
        <dbReference type="ChEBI" id="CHEBI:16708"/>
        <dbReference type="ChEBI" id="CHEBI:57844"/>
        <dbReference type="ChEBI" id="CHEBI:59789"/>
        <dbReference type="ChEBI" id="CHEBI:82833"/>
        <dbReference type="ChEBI" id="CHEBI:194443"/>
        <dbReference type="EC" id="2.4.99.17"/>
    </reaction>
</comment>
<comment type="pathway">
    <text evidence="1">tRNA modification; tRNA-queuosine biosynthesis.</text>
</comment>
<comment type="subunit">
    <text evidence="1">Monomer.</text>
</comment>
<comment type="subcellular location">
    <subcellularLocation>
        <location evidence="1">Cytoplasm</location>
    </subcellularLocation>
</comment>
<comment type="similarity">
    <text evidence="1">Belongs to the QueA family.</text>
</comment>
<dbReference type="EC" id="2.4.99.17" evidence="1"/>
<dbReference type="EMBL" id="AM746676">
    <property type="protein sequence ID" value="CAN91809.1"/>
    <property type="molecule type" value="Genomic_DNA"/>
</dbReference>
<dbReference type="RefSeq" id="WP_012234286.1">
    <property type="nucleotide sequence ID" value="NC_010162.1"/>
</dbReference>
<dbReference type="SMR" id="A9FI02"/>
<dbReference type="STRING" id="448385.sce1651"/>
<dbReference type="KEGG" id="scl:sce1651"/>
<dbReference type="eggNOG" id="COG0809">
    <property type="taxonomic scope" value="Bacteria"/>
</dbReference>
<dbReference type="HOGENOM" id="CLU_039110_1_0_7"/>
<dbReference type="OrthoDB" id="9805933at2"/>
<dbReference type="BioCyc" id="SCEL448385:SCE_RS08500-MONOMER"/>
<dbReference type="UniPathway" id="UPA00392"/>
<dbReference type="Proteomes" id="UP000002139">
    <property type="component" value="Chromosome"/>
</dbReference>
<dbReference type="GO" id="GO:0005737">
    <property type="term" value="C:cytoplasm"/>
    <property type="evidence" value="ECO:0007669"/>
    <property type="project" value="UniProtKB-SubCell"/>
</dbReference>
<dbReference type="GO" id="GO:0051075">
    <property type="term" value="F:S-adenosylmethionine:tRNA ribosyltransferase-isomerase activity"/>
    <property type="evidence" value="ECO:0007669"/>
    <property type="project" value="UniProtKB-EC"/>
</dbReference>
<dbReference type="GO" id="GO:0008616">
    <property type="term" value="P:queuosine biosynthetic process"/>
    <property type="evidence" value="ECO:0007669"/>
    <property type="project" value="UniProtKB-UniRule"/>
</dbReference>
<dbReference type="GO" id="GO:0002099">
    <property type="term" value="P:tRNA wobble guanine modification"/>
    <property type="evidence" value="ECO:0007669"/>
    <property type="project" value="TreeGrafter"/>
</dbReference>
<dbReference type="Gene3D" id="2.40.10.240">
    <property type="entry name" value="QueA-like"/>
    <property type="match status" value="1"/>
</dbReference>
<dbReference type="Gene3D" id="3.40.1780.10">
    <property type="entry name" value="QueA-like"/>
    <property type="match status" value="1"/>
</dbReference>
<dbReference type="HAMAP" id="MF_00113">
    <property type="entry name" value="QueA"/>
    <property type="match status" value="1"/>
</dbReference>
<dbReference type="InterPro" id="IPR003699">
    <property type="entry name" value="QueA"/>
</dbReference>
<dbReference type="InterPro" id="IPR042118">
    <property type="entry name" value="QueA_dom1"/>
</dbReference>
<dbReference type="InterPro" id="IPR042119">
    <property type="entry name" value="QueA_dom2"/>
</dbReference>
<dbReference type="InterPro" id="IPR036100">
    <property type="entry name" value="QueA_sf"/>
</dbReference>
<dbReference type="NCBIfam" id="NF001140">
    <property type="entry name" value="PRK00147.1"/>
    <property type="match status" value="1"/>
</dbReference>
<dbReference type="NCBIfam" id="TIGR00113">
    <property type="entry name" value="queA"/>
    <property type="match status" value="1"/>
</dbReference>
<dbReference type="PANTHER" id="PTHR30307">
    <property type="entry name" value="S-ADENOSYLMETHIONINE:TRNA RIBOSYLTRANSFERASE-ISOMERASE"/>
    <property type="match status" value="1"/>
</dbReference>
<dbReference type="PANTHER" id="PTHR30307:SF0">
    <property type="entry name" value="S-ADENOSYLMETHIONINE:TRNA RIBOSYLTRANSFERASE-ISOMERASE"/>
    <property type="match status" value="1"/>
</dbReference>
<dbReference type="Pfam" id="PF02547">
    <property type="entry name" value="Queuosine_synth"/>
    <property type="match status" value="1"/>
</dbReference>
<dbReference type="SUPFAM" id="SSF111337">
    <property type="entry name" value="QueA-like"/>
    <property type="match status" value="1"/>
</dbReference>
<accession>A9FI02</accession>
<gene>
    <name evidence="1" type="primary">queA</name>
    <name type="ordered locus">sce1651</name>
</gene>
<name>QUEA_SORC5</name>
<sequence>MRCELLDYELPEALIASRPPEERDGARLLLVDRGRRAGEVEHAAIRDLDRYIERGALVIVNDTKVVPARLFGRKRGTGGQVELFLLHRLDGAPAGAEDLGGGPQESAPRSERWRAMGRASKPIRPGSVLDIERDGALVAEVLERAEDGVLTVQLSSPAGLSVAAAIDAYGHVPLPPYLGRGDDASDRERYQTIFARVPGAVAAPTAGLHLSPGLVERLRANGVEIASVTLHVGLGTFQPVTVDDLDLHPMHAEVYSIPDATAGAIAGARARGAPVIAIGTTVVRALESAADPARAGLVQAQSGETRLLIQPGYRFRVVDALLTNFHLPRSTLLALVFAFAGRERTLLAYRAAIDAGYRFYSYGDAMLIRGVDAP</sequence>
<proteinExistence type="inferred from homology"/>
<evidence type="ECO:0000255" key="1">
    <source>
        <dbReference type="HAMAP-Rule" id="MF_00113"/>
    </source>
</evidence>
<reference key="1">
    <citation type="journal article" date="2007" name="Nat. Biotechnol.">
        <title>Complete genome sequence of the myxobacterium Sorangium cellulosum.</title>
        <authorList>
            <person name="Schneiker S."/>
            <person name="Perlova O."/>
            <person name="Kaiser O."/>
            <person name="Gerth K."/>
            <person name="Alici A."/>
            <person name="Altmeyer M.O."/>
            <person name="Bartels D."/>
            <person name="Bekel T."/>
            <person name="Beyer S."/>
            <person name="Bode E."/>
            <person name="Bode H.B."/>
            <person name="Bolten C.J."/>
            <person name="Choudhuri J.V."/>
            <person name="Doss S."/>
            <person name="Elnakady Y.A."/>
            <person name="Frank B."/>
            <person name="Gaigalat L."/>
            <person name="Goesmann A."/>
            <person name="Groeger C."/>
            <person name="Gross F."/>
            <person name="Jelsbak L."/>
            <person name="Jelsbak L."/>
            <person name="Kalinowski J."/>
            <person name="Kegler C."/>
            <person name="Knauber T."/>
            <person name="Konietzny S."/>
            <person name="Kopp M."/>
            <person name="Krause L."/>
            <person name="Krug D."/>
            <person name="Linke B."/>
            <person name="Mahmud T."/>
            <person name="Martinez-Arias R."/>
            <person name="McHardy A.C."/>
            <person name="Merai M."/>
            <person name="Meyer F."/>
            <person name="Mormann S."/>
            <person name="Munoz-Dorado J."/>
            <person name="Perez J."/>
            <person name="Pradella S."/>
            <person name="Rachid S."/>
            <person name="Raddatz G."/>
            <person name="Rosenau F."/>
            <person name="Rueckert C."/>
            <person name="Sasse F."/>
            <person name="Scharfe M."/>
            <person name="Schuster S.C."/>
            <person name="Suen G."/>
            <person name="Treuner-Lange A."/>
            <person name="Velicer G.J."/>
            <person name="Vorholter F.-J."/>
            <person name="Weissman K.J."/>
            <person name="Welch R.D."/>
            <person name="Wenzel S.C."/>
            <person name="Whitworth D.E."/>
            <person name="Wilhelm S."/>
            <person name="Wittmann C."/>
            <person name="Bloecker H."/>
            <person name="Puehler A."/>
            <person name="Mueller R."/>
        </authorList>
    </citation>
    <scope>NUCLEOTIDE SEQUENCE [LARGE SCALE GENOMIC DNA]</scope>
    <source>
        <strain>So ce56</strain>
    </source>
</reference>
<protein>
    <recommendedName>
        <fullName evidence="1">S-adenosylmethionine:tRNA ribosyltransferase-isomerase</fullName>
        <ecNumber evidence="1">2.4.99.17</ecNumber>
    </recommendedName>
    <alternativeName>
        <fullName evidence="1">Queuosine biosynthesis protein QueA</fullName>
    </alternativeName>
</protein>